<evidence type="ECO:0000250" key="1"/>
<evidence type="ECO:0000255" key="2"/>
<evidence type="ECO:0000269" key="3">
    <source>
    </source>
</evidence>
<evidence type="ECO:0000305" key="4"/>
<keyword id="KW-1003">Cell membrane</keyword>
<keyword id="KW-0472">Membrane</keyword>
<keyword id="KW-1185">Reference proteome</keyword>
<keyword id="KW-0677">Repeat</keyword>
<keyword id="KW-0346">Stress response</keyword>
<keyword id="KW-0812">Transmembrane</keyword>
<keyword id="KW-1133">Transmembrane helix</keyword>
<keyword id="KW-0813">Transport</keyword>
<organism>
    <name type="scientific">Zea mays</name>
    <name type="common">Maize</name>
    <dbReference type="NCBI Taxonomy" id="4577"/>
    <lineage>
        <taxon>Eukaryota</taxon>
        <taxon>Viridiplantae</taxon>
        <taxon>Streptophyta</taxon>
        <taxon>Embryophyta</taxon>
        <taxon>Tracheophyta</taxon>
        <taxon>Spermatophyta</taxon>
        <taxon>Magnoliopsida</taxon>
        <taxon>Liliopsida</taxon>
        <taxon>Poales</taxon>
        <taxon>Poaceae</taxon>
        <taxon>PACMAD clade</taxon>
        <taxon>Panicoideae</taxon>
        <taxon>Andropogonodae</taxon>
        <taxon>Andropogoneae</taxon>
        <taxon>Tripsacinae</taxon>
        <taxon>Zea</taxon>
    </lineage>
</organism>
<dbReference type="EMBL" id="AF326503">
    <property type="protein sequence ID" value="AAK26770.1"/>
    <property type="molecule type" value="mRNA"/>
</dbReference>
<dbReference type="EMBL" id="AF057183">
    <property type="protein sequence ID" value="AAC24569.1"/>
    <property type="molecule type" value="mRNA"/>
</dbReference>
<dbReference type="EMBL" id="AY243804">
    <property type="protein sequence ID" value="AAO86710.1"/>
    <property type="molecule type" value="mRNA"/>
</dbReference>
<dbReference type="PIR" id="T01648">
    <property type="entry name" value="T01648"/>
</dbReference>
<dbReference type="RefSeq" id="NP_001104907.1">
    <property type="nucleotide sequence ID" value="NM_001111437.1"/>
</dbReference>
<dbReference type="SMR" id="Q84RL6"/>
<dbReference type="STRING" id="4577.Q84RL6"/>
<dbReference type="PaxDb" id="4577-GRMZM2G125023_P01"/>
<dbReference type="EnsemblPlants" id="Zm00001eb429750_T001">
    <property type="protein sequence ID" value="Zm00001eb429750_P001"/>
    <property type="gene ID" value="Zm00001eb429750"/>
</dbReference>
<dbReference type="Gramene" id="Zm00001eb429750_T001">
    <property type="protein sequence ID" value="Zm00001eb429750_P001"/>
    <property type="gene ID" value="Zm00001eb429750"/>
</dbReference>
<dbReference type="MaizeGDB" id="199158"/>
<dbReference type="eggNOG" id="KOG0223">
    <property type="taxonomic scope" value="Eukaryota"/>
</dbReference>
<dbReference type="HOGENOM" id="CLU_020019_3_4_1"/>
<dbReference type="InParanoid" id="Q84RL6"/>
<dbReference type="OMA" id="HINPAMS"/>
<dbReference type="OrthoDB" id="3222at2759"/>
<dbReference type="Proteomes" id="UP000007305">
    <property type="component" value="Chromosome 10"/>
</dbReference>
<dbReference type="ExpressionAtlas" id="Q84RL6">
    <property type="expression patterns" value="baseline and differential"/>
</dbReference>
<dbReference type="GO" id="GO:0016020">
    <property type="term" value="C:membrane"/>
    <property type="evidence" value="ECO:0000304"/>
    <property type="project" value="AgBase"/>
</dbReference>
<dbReference type="GO" id="GO:0009705">
    <property type="term" value="C:plant-type vacuole membrane"/>
    <property type="evidence" value="ECO:0000318"/>
    <property type="project" value="GO_Central"/>
</dbReference>
<dbReference type="GO" id="GO:0005886">
    <property type="term" value="C:plasma membrane"/>
    <property type="evidence" value="ECO:0007669"/>
    <property type="project" value="UniProtKB-SubCell"/>
</dbReference>
<dbReference type="GO" id="GO:0032586">
    <property type="term" value="C:protein storage vacuole membrane"/>
    <property type="evidence" value="ECO:0000304"/>
    <property type="project" value="AgBase"/>
</dbReference>
<dbReference type="GO" id="GO:0015250">
    <property type="term" value="F:water channel activity"/>
    <property type="evidence" value="ECO:0000318"/>
    <property type="project" value="GO_Central"/>
</dbReference>
<dbReference type="GO" id="GO:0006833">
    <property type="term" value="P:water transport"/>
    <property type="evidence" value="ECO:0000318"/>
    <property type="project" value="GO_Central"/>
</dbReference>
<dbReference type="CDD" id="cd00333">
    <property type="entry name" value="MIP"/>
    <property type="match status" value="1"/>
</dbReference>
<dbReference type="FunFam" id="1.20.1080.10:FF:000002">
    <property type="entry name" value="Probable aquaporin TIP1-1"/>
    <property type="match status" value="1"/>
</dbReference>
<dbReference type="Gene3D" id="1.20.1080.10">
    <property type="entry name" value="Glycerol uptake facilitator protein"/>
    <property type="match status" value="1"/>
</dbReference>
<dbReference type="InterPro" id="IPR023271">
    <property type="entry name" value="Aquaporin-like"/>
</dbReference>
<dbReference type="InterPro" id="IPR034294">
    <property type="entry name" value="Aquaporin_transptr"/>
</dbReference>
<dbReference type="InterPro" id="IPR000425">
    <property type="entry name" value="MIP"/>
</dbReference>
<dbReference type="InterPro" id="IPR022357">
    <property type="entry name" value="MIP_CS"/>
</dbReference>
<dbReference type="NCBIfam" id="TIGR00861">
    <property type="entry name" value="MIP"/>
    <property type="match status" value="1"/>
</dbReference>
<dbReference type="PANTHER" id="PTHR45665:SF53">
    <property type="entry name" value="AQUAPORIN TIP2-3"/>
    <property type="match status" value="1"/>
</dbReference>
<dbReference type="PANTHER" id="PTHR45665">
    <property type="entry name" value="AQUAPORIN-8"/>
    <property type="match status" value="1"/>
</dbReference>
<dbReference type="Pfam" id="PF00230">
    <property type="entry name" value="MIP"/>
    <property type="match status" value="1"/>
</dbReference>
<dbReference type="PRINTS" id="PR00783">
    <property type="entry name" value="MINTRINSICP"/>
</dbReference>
<dbReference type="SUPFAM" id="SSF81338">
    <property type="entry name" value="Aquaporin-like"/>
    <property type="match status" value="1"/>
</dbReference>
<dbReference type="PROSITE" id="PS00221">
    <property type="entry name" value="MIP"/>
    <property type="match status" value="1"/>
</dbReference>
<protein>
    <recommendedName>
        <fullName>Aquaporin TIP2-3</fullName>
    </recommendedName>
    <alternativeName>
        <fullName>Tonoplast intrinsic protein 2-3</fullName>
    </alternativeName>
    <alternativeName>
        <fullName>ZmTIP2-3</fullName>
    </alternativeName>
    <alternativeName>
        <fullName>ZmTIP2;3</fullName>
    </alternativeName>
</protein>
<feature type="chain" id="PRO_0000286005" description="Aquaporin TIP2-3">
    <location>
        <begin position="1"/>
        <end position="248"/>
    </location>
</feature>
<feature type="transmembrane region" description="Helical; Name=1" evidence="2">
    <location>
        <begin position="20"/>
        <end position="40"/>
    </location>
</feature>
<feature type="transmembrane region" description="Helical; Name=2" evidence="2">
    <location>
        <begin position="54"/>
        <end position="74"/>
    </location>
</feature>
<feature type="transmembrane region" description="Helical; Name=3" evidence="2">
    <location>
        <begin position="97"/>
        <end position="119"/>
    </location>
</feature>
<feature type="transmembrane region" description="Helical; Name=4" evidence="2">
    <location>
        <begin position="141"/>
        <end position="161"/>
    </location>
</feature>
<feature type="transmembrane region" description="Helical; Name=5" evidence="2">
    <location>
        <begin position="168"/>
        <end position="188"/>
    </location>
</feature>
<feature type="transmembrane region" description="Helical; Name=6" evidence="2">
    <location>
        <begin position="217"/>
        <end position="237"/>
    </location>
</feature>
<feature type="short sequence motif" description="NPA 1" evidence="1">
    <location>
        <begin position="83"/>
        <end position="85"/>
    </location>
</feature>
<feature type="short sequence motif" description="NPA 2" evidence="1">
    <location>
        <begin position="196"/>
        <end position="198"/>
    </location>
</feature>
<feature type="sequence conflict" description="In Ref. 3; AAO86710." evidence="4" ref="3">
    <original>L</original>
    <variation>P</variation>
    <location>
        <position position="229"/>
    </location>
</feature>
<reference key="1">
    <citation type="journal article" date="2001" name="Plant Physiol.">
        <title>Aquaporins constitute a large and highly divergent protein family in maize.</title>
        <authorList>
            <person name="Chaumont F."/>
            <person name="Barrieu F."/>
            <person name="Wojcik E."/>
            <person name="Chrispeels M.J."/>
            <person name="Jung R."/>
        </authorList>
    </citation>
    <scope>NUCLEOTIDE SEQUENCE [MRNA]</scope>
    <scope>GENE FAMILY</scope>
    <scope>NOMENCLATURE</scope>
    <source>
        <strain>cv. B73</strain>
    </source>
</reference>
<reference key="2">
    <citation type="submission" date="1998-04" db="EMBL/GenBank/DDBJ databases">
        <authorList>
            <person name="Finkelstein D.B."/>
            <person name="Drew M.C."/>
            <person name="Jordan W.J."/>
            <person name="Wing R.A."/>
            <person name="Mullet J.E."/>
            <person name="Morgan P.W."/>
        </authorList>
    </citation>
    <scope>NUCLEOTIDE SEQUENCE [MRNA]</scope>
    <source>
        <strain>cv. Texas 5855</strain>
        <tissue>Root tip</tissue>
    </source>
</reference>
<reference key="3">
    <citation type="journal article" date="2003" name="Plant Cell Physiol.">
        <title>Diurnal regulation of water transport and aquaporin gene expression in maize roots: contribution of PIP2 proteins.</title>
        <authorList>
            <person name="Lopez F."/>
            <person name="Bousser A."/>
            <person name="Sissoeff I."/>
            <person name="Gaspar M."/>
            <person name="Lachaise B."/>
            <person name="Hoarau J."/>
            <person name="Mahe A."/>
        </authorList>
    </citation>
    <scope>NUCLEOTIDE SEQUENCE [MRNA]</scope>
    <source>
        <tissue>Root</tissue>
    </source>
</reference>
<reference key="4">
    <citation type="journal article" date="2004" name="J. Exp. Bot.">
        <title>Characterization in maize of ZmTIP2-3, a root-specific tonoplast intrinsic protein exhibiting aquaporin activity.</title>
        <authorList>
            <person name="Lopez F."/>
            <person name="Bousser A."/>
            <person name="Sissoeff I."/>
            <person name="Hoarau J."/>
            <person name="Mahe A."/>
        </authorList>
    </citation>
    <scope>FUNCTION</scope>
    <scope>TISSUE SPECIFICITY</scope>
    <scope>INDUCTION</scope>
</reference>
<name>TIP23_MAIZE</name>
<comment type="function">
    <text evidence="3">Water channel required to facilitate the transport of water across cell membrane.</text>
</comment>
<comment type="subcellular location">
    <subcellularLocation>
        <location evidence="1">Cell membrane</location>
        <topology evidence="1">Multi-pass membrane protein</topology>
    </subcellularLocation>
</comment>
<comment type="tissue specificity">
    <text evidence="3">Specifically expressed in roots.</text>
</comment>
<comment type="induction">
    <text evidence="3">By salt and osmotic stress. Expressed in roots with a circadian rhythm showing an increase at the end of the night period, a peak during the first part of the light period and then a decrease.</text>
</comment>
<comment type="domain">
    <text>Aquaporins contain two tandem repeats each containing three membrane-spanning domains and a pore-forming loop with the signature motif Asn-Pro-Ala (NPA).</text>
</comment>
<comment type="similarity">
    <text evidence="4">Belongs to the MIP/aquaporin (TC 1.A.8) family. TIP (TC 1.A.8.10) subfamily.</text>
</comment>
<proteinExistence type="evidence at transcript level"/>
<gene>
    <name type="primary">TIP2-3</name>
    <name type="synonym">POR2</name>
</gene>
<accession>Q84RL6</accession>
<accession>O81216</accession>
<sequence length="248" mass="25132">MVKLAFGSFRDSLSAASLKAYVAEFIATLLFVFAGVGSAIAYSQLTKGGALDPAGLVAIAIAHAFALFVGVSMAANISGGHLNPAVTFGLAVGGHITILTGILYWVAQLLGASVACFLLQYVTHGQAIPTHGVSGISEIEGVVMEIVITFALVYTVYATAADPKKGSLGTIAPMAIGFIVGANILAAGPFSGGSMNPARSFGPAVAAGNFAGNWVYWVGPLVGGGLAGLVYGDVFIASYQPVGQQEYP</sequence>